<keyword id="KW-1185">Reference proteome</keyword>
<comment type="miscellaneous">
    <text evidence="1">Encoded by the e14 prophage.</text>
</comment>
<comment type="similarity">
    <text evidence="1">Belongs to the Mu gp47/PBSX XkdT family.</text>
</comment>
<comment type="caution">
    <text evidence="1">Could be the product of a pseudogene, it is missing about 90 N-terminal residues compared to orthologs.</text>
</comment>
<comment type="sequence caution" evidence="1">
    <conflict type="erroneous initiation">
        <sequence resource="EMBL-CDS" id="BAA35978"/>
    </conflict>
    <text>Truncated N-terminus.</text>
</comment>
<organism>
    <name type="scientific">Escherichia coli (strain K12)</name>
    <dbReference type="NCBI Taxonomy" id="83333"/>
    <lineage>
        <taxon>Bacteria</taxon>
        <taxon>Pseudomonadati</taxon>
        <taxon>Pseudomonadota</taxon>
        <taxon>Gammaproteobacteria</taxon>
        <taxon>Enterobacterales</taxon>
        <taxon>Enterobacteriaceae</taxon>
        <taxon>Escherichia</taxon>
    </lineage>
</organism>
<evidence type="ECO:0000305" key="1"/>
<proteinExistence type="uncertain"/>
<feature type="chain" id="PRO_0000077844" description="Putative protein JayE">
    <location>
        <begin position="1"/>
        <end position="263"/>
    </location>
</feature>
<accession>P75981</accession>
<accession>Q9R3Z3</accession>
<protein>
    <recommendedName>
        <fullName evidence="1">Putative protein JayE</fullName>
    </recommendedName>
    <alternativeName>
        <fullName>Putative protein JayE from lambdoid prophage e14 region</fullName>
    </alternativeName>
</protein>
<sequence>MWYMRWEGVSDGLKVTAGSVIQRDDLVQYTTTDDATSSGGVLRVPIACSSAGAVGNADDGTALILVTPVNGLPSSGVADTLTGGFDTEELETWRARVIERYYWTPQGGADGDYVVWAKEVPGITRAWTYRHLMGTGTVGVMIASSDLINPIPEESTETAARQHIGPLAPVAGSDLYVFRPVAHTVDFHIRVTPDTPEIRAAITAELRSFLLRDGYPQGELKVSRISEAISGANGEYSHQLLAPVDNISIAKNELAVLGTISWT</sequence>
<dbReference type="EMBL" id="U00096">
    <property type="status" value="NOT_ANNOTATED_CDS"/>
    <property type="molecule type" value="Genomic_DNA"/>
</dbReference>
<dbReference type="EMBL" id="AP009048">
    <property type="protein sequence ID" value="BAA35978.2"/>
    <property type="status" value="ALT_INIT"/>
    <property type="molecule type" value="Genomic_DNA"/>
</dbReference>
<dbReference type="PIR" id="E64860">
    <property type="entry name" value="E64860"/>
</dbReference>
<dbReference type="SMR" id="P75981"/>
<dbReference type="BioGRID" id="4262854">
    <property type="interactions" value="5"/>
</dbReference>
<dbReference type="FunCoup" id="P75981">
    <property type="interactions" value="41"/>
</dbReference>
<dbReference type="jPOST" id="P75981"/>
<dbReference type="KEGG" id="ecj:JW5170"/>
<dbReference type="PATRIC" id="fig|83333.103.peg.1940"/>
<dbReference type="EchoBASE" id="EB4002"/>
<dbReference type="eggNOG" id="COG3299">
    <property type="taxonomic scope" value="Bacteria"/>
</dbReference>
<dbReference type="HOGENOM" id="CLU_039609_1_1_6"/>
<dbReference type="InParanoid" id="P75981"/>
<dbReference type="PhylomeDB" id="P75981"/>
<dbReference type="Proteomes" id="UP000000625">
    <property type="component" value="Chromosome"/>
</dbReference>
<dbReference type="InterPro" id="IPR006949">
    <property type="entry name" value="Baseplate_J-like"/>
</dbReference>
<dbReference type="InterPro" id="IPR052399">
    <property type="entry name" value="Phage_Baseplate_Assmbl_Protein"/>
</dbReference>
<dbReference type="PANTHER" id="PTHR37829">
    <property type="entry name" value="PHAGE-LIKE ELEMENT PBSX PROTEIN XKDT"/>
    <property type="match status" value="1"/>
</dbReference>
<dbReference type="PANTHER" id="PTHR37829:SF3">
    <property type="entry name" value="PROTEIN JAYE-RELATED"/>
    <property type="match status" value="1"/>
</dbReference>
<dbReference type="Pfam" id="PF04865">
    <property type="entry name" value="Baseplate_J"/>
    <property type="match status" value="1"/>
</dbReference>
<name>JAYE_ECOLI</name>
<reference key="1">
    <citation type="journal article" date="1996" name="DNA Res.">
        <title>A 718-kb DNA sequence of the Escherichia coli K-12 genome corresponding to the 12.7-28.0 min region on the linkage map.</title>
        <authorList>
            <person name="Oshima T."/>
            <person name="Aiba H."/>
            <person name="Baba T."/>
            <person name="Fujita K."/>
            <person name="Hayashi K."/>
            <person name="Honjo A."/>
            <person name="Ikemoto K."/>
            <person name="Inada T."/>
            <person name="Itoh T."/>
            <person name="Kajihara M."/>
            <person name="Kanai K."/>
            <person name="Kashimoto K."/>
            <person name="Kimura S."/>
            <person name="Kitagawa M."/>
            <person name="Makino K."/>
            <person name="Masuda S."/>
            <person name="Miki T."/>
            <person name="Mizobuchi K."/>
            <person name="Mori H."/>
            <person name="Motomura K."/>
            <person name="Nakamura Y."/>
            <person name="Nashimoto H."/>
            <person name="Nishio Y."/>
            <person name="Saito N."/>
            <person name="Sampei G."/>
            <person name="Seki Y."/>
            <person name="Tagami H."/>
            <person name="Takemoto K."/>
            <person name="Wada C."/>
            <person name="Yamamoto Y."/>
            <person name="Yano M."/>
            <person name="Horiuchi T."/>
        </authorList>
    </citation>
    <scope>NUCLEOTIDE SEQUENCE [LARGE SCALE GENOMIC DNA]</scope>
    <source>
        <strain>K12 / W3110 / ATCC 27325 / DSM 5911</strain>
    </source>
</reference>
<reference key="2">
    <citation type="journal article" date="1997" name="Science">
        <title>The complete genome sequence of Escherichia coli K-12.</title>
        <authorList>
            <person name="Blattner F.R."/>
            <person name="Plunkett G. III"/>
            <person name="Bloch C.A."/>
            <person name="Perna N.T."/>
            <person name="Burland V."/>
            <person name="Riley M."/>
            <person name="Collado-Vides J."/>
            <person name="Glasner J.D."/>
            <person name="Rode C.K."/>
            <person name="Mayhew G.F."/>
            <person name="Gregor J."/>
            <person name="Davis N.W."/>
            <person name="Kirkpatrick H.A."/>
            <person name="Goeden M.A."/>
            <person name="Rose D.J."/>
            <person name="Mau B."/>
            <person name="Shao Y."/>
        </authorList>
    </citation>
    <scope>NUCLEOTIDE SEQUENCE [LARGE SCALE GENOMIC DNA]</scope>
    <source>
        <strain>K12 / MG1655 / ATCC 47076</strain>
    </source>
</reference>
<reference key="3">
    <citation type="journal article" date="2006" name="Mol. Syst. Biol.">
        <title>Highly accurate genome sequences of Escherichia coli K-12 strains MG1655 and W3110.</title>
        <authorList>
            <person name="Hayashi K."/>
            <person name="Morooka N."/>
            <person name="Yamamoto Y."/>
            <person name="Fujita K."/>
            <person name="Isono K."/>
            <person name="Choi S."/>
            <person name="Ohtsubo E."/>
            <person name="Baba T."/>
            <person name="Wanner B.L."/>
            <person name="Mori H."/>
            <person name="Horiuchi T."/>
        </authorList>
    </citation>
    <scope>NUCLEOTIDE SEQUENCE [LARGE SCALE GENOMIC DNA]</scope>
    <source>
        <strain>K12 / W3110 / ATCC 27325 / DSM 5911</strain>
    </source>
</reference>
<gene>
    <name type="primary">jayE</name>
    <name type="synonym">ymfP</name>
    <name type="ordered locus">b1152</name>
    <name type="ordered locus">JW5170</name>
</gene>